<feature type="signal peptide" evidence="2">
    <location>
        <begin position="1"/>
        <end position="38"/>
    </location>
</feature>
<feature type="propeptide" id="PRO_0000314675" description="N-terminal propeptide">
    <location>
        <begin position="39"/>
        <end status="unknown"/>
    </location>
</feature>
<feature type="chain" id="PRO_0000314676" description="Collagen alpha-1(XXVII) chain B">
    <location>
        <begin status="unknown"/>
        <end position="1420"/>
    </location>
</feature>
<feature type="propeptide" id="PRO_0000314677" description="C-terminal propeptide">
    <location>
        <begin position="1421"/>
        <end position="1658"/>
    </location>
</feature>
<feature type="domain" description="Laminin G-like">
    <location>
        <begin position="66"/>
        <end position="229"/>
    </location>
</feature>
<feature type="domain" description="Collagen-like 1">
    <location>
        <begin position="425"/>
        <end position="478"/>
    </location>
</feature>
<feature type="domain" description="Collagen-like 2">
    <location>
        <begin position="493"/>
        <end position="552"/>
    </location>
</feature>
<feature type="domain" description="Collagen-like 3">
    <location>
        <begin position="556"/>
        <end position="615"/>
    </location>
</feature>
<feature type="domain" description="Collagen-like 4">
    <location>
        <begin position="622"/>
        <end position="681"/>
    </location>
</feature>
<feature type="domain" description="Collagen-like 5">
    <location>
        <begin position="685"/>
        <end position="744"/>
    </location>
</feature>
<feature type="domain" description="Collagen-like 6">
    <location>
        <begin position="748"/>
        <end position="807"/>
    </location>
</feature>
<feature type="domain" description="Collagen-like 7">
    <location>
        <begin position="811"/>
        <end position="870"/>
    </location>
</feature>
<feature type="domain" description="Collagen-like 8">
    <location>
        <begin position="892"/>
        <end position="951"/>
    </location>
</feature>
<feature type="domain" description="Collagen-like 9">
    <location>
        <begin position="952"/>
        <end position="1011"/>
    </location>
</feature>
<feature type="domain" description="Collagen-like 10">
    <location>
        <begin position="1024"/>
        <end position="1083"/>
    </location>
</feature>
<feature type="domain" description="Collagen-like 11">
    <location>
        <begin position="1084"/>
        <end position="1137"/>
    </location>
</feature>
<feature type="domain" description="Collagen-like 12">
    <location>
        <begin position="1139"/>
        <end position="1198"/>
    </location>
</feature>
<feature type="domain" description="Collagen-like 13">
    <location>
        <begin position="1199"/>
        <end position="1258"/>
    </location>
</feature>
<feature type="domain" description="Collagen-like 14">
    <location>
        <begin position="1268"/>
        <end position="1327"/>
    </location>
</feature>
<feature type="domain" description="Collagen-like 15">
    <location>
        <begin position="1361"/>
        <end position="1420"/>
    </location>
</feature>
<feature type="domain" description="Fibrillar collagen NC1" evidence="3">
    <location>
        <begin position="1458"/>
        <end position="1658"/>
    </location>
</feature>
<feature type="region of interest" description="Disordered" evidence="4">
    <location>
        <begin position="308"/>
        <end position="332"/>
    </location>
</feature>
<feature type="region of interest" description="Disordered" evidence="4">
    <location>
        <begin position="345"/>
        <end position="364"/>
    </location>
</feature>
<feature type="region of interest" description="Triple-helical region">
    <location>
        <begin position="424"/>
        <end position="1417"/>
    </location>
</feature>
<feature type="region of interest" description="Disordered" evidence="4">
    <location>
        <begin position="427"/>
        <end position="550"/>
    </location>
</feature>
<feature type="region of interest" description="Disordered" evidence="4">
    <location>
        <begin position="571"/>
        <end position="614"/>
    </location>
</feature>
<feature type="region of interest" description="Disordered" evidence="4">
    <location>
        <begin position="637"/>
        <end position="1332"/>
    </location>
</feature>
<feature type="region of interest" description="Disordered" evidence="4">
    <location>
        <begin position="1377"/>
        <end position="1415"/>
    </location>
</feature>
<feature type="compositionally biased region" description="Polar residues" evidence="4">
    <location>
        <begin position="308"/>
        <end position="323"/>
    </location>
</feature>
<feature type="compositionally biased region" description="Pro residues" evidence="4">
    <location>
        <begin position="434"/>
        <end position="444"/>
    </location>
</feature>
<feature type="compositionally biased region" description="Low complexity" evidence="4">
    <location>
        <begin position="491"/>
        <end position="506"/>
    </location>
</feature>
<feature type="compositionally biased region" description="Low complexity" evidence="4">
    <location>
        <begin position="657"/>
        <end position="666"/>
    </location>
</feature>
<feature type="compositionally biased region" description="Low complexity" evidence="4">
    <location>
        <begin position="678"/>
        <end position="692"/>
    </location>
</feature>
<feature type="compositionally biased region" description="Gly residues" evidence="4">
    <location>
        <begin position="733"/>
        <end position="742"/>
    </location>
</feature>
<feature type="compositionally biased region" description="Low complexity" evidence="4">
    <location>
        <begin position="837"/>
        <end position="852"/>
    </location>
</feature>
<feature type="compositionally biased region" description="Low complexity" evidence="4">
    <location>
        <begin position="875"/>
        <end position="890"/>
    </location>
</feature>
<feature type="compositionally biased region" description="Basic and acidic residues" evidence="4">
    <location>
        <begin position="1040"/>
        <end position="1058"/>
    </location>
</feature>
<feature type="compositionally biased region" description="Low complexity" evidence="4">
    <location>
        <begin position="1112"/>
        <end position="1124"/>
    </location>
</feature>
<feature type="compositionally biased region" description="Basic and acidic residues" evidence="4">
    <location>
        <begin position="1125"/>
        <end position="1137"/>
    </location>
</feature>
<feature type="compositionally biased region" description="Low complexity" evidence="4">
    <location>
        <begin position="1215"/>
        <end position="1230"/>
    </location>
</feature>
<feature type="compositionally biased region" description="Gly residues" evidence="4">
    <location>
        <begin position="1307"/>
        <end position="1316"/>
    </location>
</feature>
<feature type="compositionally biased region" description="Pro residues" evidence="4">
    <location>
        <begin position="1402"/>
        <end position="1415"/>
    </location>
</feature>
<feature type="binding site" evidence="1">
    <location>
        <position position="1506"/>
    </location>
    <ligand>
        <name>Ca(2+)</name>
        <dbReference type="ChEBI" id="CHEBI:29108"/>
    </ligand>
</feature>
<feature type="binding site" evidence="1">
    <location>
        <position position="1508"/>
    </location>
    <ligand>
        <name>Ca(2+)</name>
        <dbReference type="ChEBI" id="CHEBI:29108"/>
    </ligand>
</feature>
<feature type="binding site" evidence="1">
    <location>
        <position position="1511"/>
    </location>
    <ligand>
        <name>Ca(2+)</name>
        <dbReference type="ChEBI" id="CHEBI:29108"/>
    </ligand>
</feature>
<feature type="binding site" evidence="1">
    <location>
        <position position="1514"/>
    </location>
    <ligand>
        <name>Ca(2+)</name>
        <dbReference type="ChEBI" id="CHEBI:29108"/>
    </ligand>
</feature>
<feature type="glycosylation site" description="N-linked (GlcNAc...) asparagine" evidence="2">
    <location>
        <position position="1567"/>
    </location>
</feature>
<feature type="disulfide bond" evidence="3">
    <location>
        <begin position="1488"/>
        <end position="1520"/>
    </location>
</feature>
<feature type="disulfide bond" description="Interchain (with C-1285)" evidence="3">
    <location>
        <position position="1494"/>
    </location>
</feature>
<feature type="disulfide bond" description="Interchain (with C-1268)" evidence="3">
    <location>
        <position position="1511"/>
    </location>
</feature>
<feature type="disulfide bond" evidence="3">
    <location>
        <begin position="1529"/>
        <end position="1656"/>
    </location>
</feature>
<feature type="disulfide bond" evidence="3">
    <location>
        <begin position="1565"/>
        <end position="1609"/>
    </location>
</feature>
<name>CRA1B_DANRE</name>
<dbReference type="EMBL" id="EF032484">
    <property type="protein sequence ID" value="ABK32518.1"/>
    <property type="molecule type" value="mRNA"/>
</dbReference>
<dbReference type="RefSeq" id="NP_001074044.1">
    <property type="nucleotide sequence ID" value="NM_001080575.1"/>
</dbReference>
<dbReference type="FunCoup" id="A0MSJ1">
    <property type="interactions" value="1039"/>
</dbReference>
<dbReference type="GlyCosmos" id="A0MSJ1">
    <property type="glycosylation" value="1 site, No reported glycans"/>
</dbReference>
<dbReference type="PaxDb" id="7955-ENSDARP00000088068"/>
<dbReference type="GeneID" id="560145"/>
<dbReference type="KEGG" id="dre:560145"/>
<dbReference type="AGR" id="ZFIN:ZDB-GENE-100119-2"/>
<dbReference type="CTD" id="560145"/>
<dbReference type="ZFIN" id="ZDB-GENE-100119-2">
    <property type="gene designation" value="col27a1b"/>
</dbReference>
<dbReference type="eggNOG" id="KOG3544">
    <property type="taxonomic scope" value="Eukaryota"/>
</dbReference>
<dbReference type="InParanoid" id="A0MSJ1"/>
<dbReference type="OrthoDB" id="8939548at2759"/>
<dbReference type="PhylomeDB" id="A0MSJ1"/>
<dbReference type="Reactome" id="R-DRE-1442490">
    <property type="pathway name" value="Collagen degradation"/>
</dbReference>
<dbReference type="Reactome" id="R-DRE-1650814">
    <property type="pathway name" value="Collagen biosynthesis and modifying enzymes"/>
</dbReference>
<dbReference type="Reactome" id="R-DRE-2022090">
    <property type="pathway name" value="Assembly of collagen fibrils and other multimeric structures"/>
</dbReference>
<dbReference type="Reactome" id="R-DRE-8948216">
    <property type="pathway name" value="Collagen chain trimerization"/>
</dbReference>
<dbReference type="PRO" id="PR:A0MSJ1"/>
<dbReference type="Proteomes" id="UP000000437">
    <property type="component" value="Alternate scaffold 5"/>
</dbReference>
<dbReference type="Proteomes" id="UP000000437">
    <property type="component" value="Chromosome 5"/>
</dbReference>
<dbReference type="GO" id="GO:0005594">
    <property type="term" value="C:collagen type IX trimer"/>
    <property type="evidence" value="ECO:0000318"/>
    <property type="project" value="GO_Central"/>
</dbReference>
<dbReference type="GO" id="GO:0062023">
    <property type="term" value="C:collagen-containing extracellular matrix"/>
    <property type="evidence" value="ECO:0000318"/>
    <property type="project" value="GO_Central"/>
</dbReference>
<dbReference type="GO" id="GO:0005615">
    <property type="term" value="C:extracellular space"/>
    <property type="evidence" value="ECO:0000318"/>
    <property type="project" value="GO_Central"/>
</dbReference>
<dbReference type="GO" id="GO:0030020">
    <property type="term" value="F:extracellular matrix structural constituent conferring tensile strength"/>
    <property type="evidence" value="ECO:0000318"/>
    <property type="project" value="GO_Central"/>
</dbReference>
<dbReference type="GO" id="GO:0046872">
    <property type="term" value="F:metal ion binding"/>
    <property type="evidence" value="ECO:0007669"/>
    <property type="project" value="UniProtKB-KW"/>
</dbReference>
<dbReference type="GO" id="GO:0030282">
    <property type="term" value="P:bone mineralization"/>
    <property type="evidence" value="ECO:0000316"/>
    <property type="project" value="ZFIN"/>
</dbReference>
<dbReference type="GO" id="GO:0048570">
    <property type="term" value="P:notochord morphogenesis"/>
    <property type="evidence" value="ECO:0000316"/>
    <property type="project" value="ZFIN"/>
</dbReference>
<dbReference type="GO" id="GO:0001501">
    <property type="term" value="P:skeletal system development"/>
    <property type="evidence" value="ECO:0000316"/>
    <property type="project" value="ZFIN"/>
</dbReference>
<dbReference type="FunFam" id="2.60.120.1000:FF:000003">
    <property type="entry name" value="Collagen alpha-1(XXVII) chain B"/>
    <property type="match status" value="1"/>
</dbReference>
<dbReference type="FunFam" id="2.60.120.1000:FF:000006">
    <property type="entry name" value="collagen alpha-1(XXVII) chain isoform X1"/>
    <property type="match status" value="1"/>
</dbReference>
<dbReference type="FunFam" id="2.60.120.200:FF:000085">
    <property type="entry name" value="collagen alpha-1(XXVII) chain isoform X1"/>
    <property type="match status" value="1"/>
</dbReference>
<dbReference type="Gene3D" id="2.60.120.1000">
    <property type="match status" value="2"/>
</dbReference>
<dbReference type="Gene3D" id="2.60.120.200">
    <property type="match status" value="1"/>
</dbReference>
<dbReference type="InterPro" id="IPR008160">
    <property type="entry name" value="Collagen"/>
</dbReference>
<dbReference type="InterPro" id="IPR050149">
    <property type="entry name" value="Collagen_superfamily"/>
</dbReference>
<dbReference type="InterPro" id="IPR013320">
    <property type="entry name" value="ConA-like_dom_sf"/>
</dbReference>
<dbReference type="InterPro" id="IPR000885">
    <property type="entry name" value="Fib_collagen_C"/>
</dbReference>
<dbReference type="InterPro" id="IPR048287">
    <property type="entry name" value="TSPN-like_N"/>
</dbReference>
<dbReference type="PANTHER" id="PTHR24023">
    <property type="entry name" value="COLLAGEN ALPHA"/>
    <property type="match status" value="1"/>
</dbReference>
<dbReference type="PANTHER" id="PTHR24023:SF1082">
    <property type="entry name" value="COLLAGEN TRIPLE HELIX REPEAT"/>
    <property type="match status" value="1"/>
</dbReference>
<dbReference type="Pfam" id="PF01410">
    <property type="entry name" value="COLFI"/>
    <property type="match status" value="2"/>
</dbReference>
<dbReference type="Pfam" id="PF01391">
    <property type="entry name" value="Collagen"/>
    <property type="match status" value="6"/>
</dbReference>
<dbReference type="SMART" id="SM00038">
    <property type="entry name" value="COLFI"/>
    <property type="match status" value="1"/>
</dbReference>
<dbReference type="SMART" id="SM00210">
    <property type="entry name" value="TSPN"/>
    <property type="match status" value="1"/>
</dbReference>
<dbReference type="SUPFAM" id="SSF49899">
    <property type="entry name" value="Concanavalin A-like lectins/glucanases"/>
    <property type="match status" value="1"/>
</dbReference>
<dbReference type="PROSITE" id="PS51461">
    <property type="entry name" value="NC1_FIB"/>
    <property type="match status" value="1"/>
</dbReference>
<keyword id="KW-0106">Calcium</keyword>
<keyword id="KW-0176">Collagen</keyword>
<keyword id="KW-0217">Developmental protein</keyword>
<keyword id="KW-1015">Disulfide bond</keyword>
<keyword id="KW-0272">Extracellular matrix</keyword>
<keyword id="KW-0325">Glycoprotein</keyword>
<keyword id="KW-0479">Metal-binding</keyword>
<keyword id="KW-1185">Reference proteome</keyword>
<keyword id="KW-0677">Repeat</keyword>
<keyword id="KW-0964">Secreted</keyword>
<keyword id="KW-0732">Signal</keyword>
<proteinExistence type="evidence at transcript level"/>
<gene>
    <name type="primary">col27a1b</name>
    <name type="synonym">col27a1</name>
</gene>
<evidence type="ECO:0000250" key="1"/>
<evidence type="ECO:0000255" key="2"/>
<evidence type="ECO:0000255" key="3">
    <source>
        <dbReference type="PROSITE-ProRule" id="PRU00793"/>
    </source>
</evidence>
<evidence type="ECO:0000256" key="4">
    <source>
        <dbReference type="SAM" id="MobiDB-lite"/>
    </source>
</evidence>
<evidence type="ECO:0000269" key="5">
    <source>
    </source>
</evidence>
<comment type="function">
    <text evidence="1 5">May play a role during the calcification of cartilage and the transition of cartilage to bone (By similarity). Together with col27a1a, plays a role in development of the notochord and axial skeleton.</text>
</comment>
<comment type="subcellular location">
    <subcellularLocation>
        <location evidence="3">Secreted</location>
        <location evidence="3">Extracellular space</location>
        <location evidence="3">Extracellular matrix</location>
    </subcellularLocation>
</comment>
<comment type="tissue specificity">
    <text evidence="5">Weakly expressed in the notochord from the 6 somite stage. Expressed throughout the notochord at 13 somites, then becomes restricted to the distal tip of the notochord by 24 hpf. Also expressed in head cartilages by 48 hpf.</text>
</comment>
<comment type="domain">
    <text evidence="1">The C-terminal propeptide, also known as COLFI domain, have crucial roles in tissue growth and repair by controlling both the intracellular assembly of procollagen molecules and the extracellular assembly of collagen fibrils. It binds a calcium ion which is essential for its function (By similarity).</text>
</comment>
<comment type="similarity">
    <text evidence="3">Belongs to the fibrillar collagen family.</text>
</comment>
<protein>
    <recommendedName>
        <fullName>Collagen alpha-1(XXVII) chain B</fullName>
    </recommendedName>
</protein>
<organism>
    <name type="scientific">Danio rerio</name>
    <name type="common">Zebrafish</name>
    <name type="synonym">Brachydanio rerio</name>
    <dbReference type="NCBI Taxonomy" id="7955"/>
    <lineage>
        <taxon>Eukaryota</taxon>
        <taxon>Metazoa</taxon>
        <taxon>Chordata</taxon>
        <taxon>Craniata</taxon>
        <taxon>Vertebrata</taxon>
        <taxon>Euteleostomi</taxon>
        <taxon>Actinopterygii</taxon>
        <taxon>Neopterygii</taxon>
        <taxon>Teleostei</taxon>
        <taxon>Ostariophysi</taxon>
        <taxon>Cypriniformes</taxon>
        <taxon>Danionidae</taxon>
        <taxon>Danioninae</taxon>
        <taxon>Danio</taxon>
    </lineage>
</organism>
<reference key="1">
    <citation type="submission" date="2006-09" db="EMBL/GenBank/DDBJ databases">
        <title>Characterization of the Danio rerio type XXVII collagen gene, col27a1.</title>
        <authorList>
            <person name="Malen R.C."/>
            <person name="Telfer H.E."/>
            <person name="Byers P.H."/>
            <person name="Pace J.M."/>
        </authorList>
    </citation>
    <scope>NUCLEOTIDE SEQUENCE [MRNA]</scope>
    <source>
        <tissue>Embryo</tissue>
    </source>
</reference>
<reference key="2">
    <citation type="journal article" date="2009" name="PLoS ONE">
        <title>Critical early roles for col27a1a and col27a1b in zebrafish notochord morphogenesis, vertebral mineralization and post-embryonic axial growth.</title>
        <authorList>
            <person name="Christiansen H.E."/>
            <person name="Lang M.R."/>
            <person name="Pace J.M."/>
            <person name="Parichy D.M."/>
        </authorList>
    </citation>
    <scope>FUNCTION</scope>
    <scope>TISSUE SPECIFICITY</scope>
</reference>
<sequence>MEPDNTPSSRLRAAGVGGRAVFFCMVLYCTCCLRLAQAQSADVDVLQRLGLVGKRPPQGFIPIKSGVILTTRARIDVPVSSVIPVSLGSTFSIILSVCSHRINNAFLFTIVTKRKRLHLGVQFIPGQILVYLGQNSSVNFDYNVHNGQWHNLALEIQGQKVTLYTSCGNTSIQANLDFQNEETLDSEGSFRLGKMSQNSVQFEGAICQFDIHPSAQAAHNYCKYIKKQCREADTYRPNLPPLLPLLPLDPNRSTIQTPKVVTDINERHLSLTRDKMNINHEGQTTVPPMITQPTLQLPLQTTAQTTASIRNRTSQISPKPTQQNRKKAKKERNKLHILKEHQISVTDSPTSQQQNQVDIPTTTTPELSSTFRVSEMTTLAAQRPLPKETSFFEAKATFFESVTPAAMDGLQTFDLEPTQYSLLELTGLKGEPGLPGPPGPPGQPGLPGKRGPRGPSGPHGKPGPPGTPGPKGKKGNPGISPGRAPSGIKGDPGLVGLPGQPGQPGRKGQKGHPGPSGHPGDQGIRGPDGSPGAKGYPGRQGLPGPIGNMGPKGVRGFIGIPGIFGLPGADGERGLPGVPGKKGKMGRPGFPGDFGERGPPGPDGNPGEIGAPGPVGIPGFIGDMGPVGMVGPPGLIGPKGVPGNPGEPGLKGDKGELGLPGEPGEPGFQGDKGIQGSPGLPGVQGKPGPQGKIGDRGPDGLPGPLGPEGFPGDIGPPGQNGVEGPKGNAGVRGIPGPGGLPGLEGDQGPVGPAGAPGLEGRPGRKGISGNPGEEGMKGEPGMTGNPGMLGERGPVGFVGPFGEMGLAGEKGDRGETGQPGPPGEKGAMGHPGAPGERGLSGPAGAPGPHGSRGLSGTRGPKGTRGARGPDGPVGEKGMMGMKGPEGPPGKQGLSGQMGKIGETGEAGPTGFTGVQGPTGPPGAKGILGEPGPQGSPGVLGPLGEIGAIGLPGKAGDQGLPGEPGEKGAVGSPGNIGEQGLIGPRGDPGVDGEAGPSGPDGAKGEQGDVGLEGESGEKGVIGFKGTEGRTGDPGLIGVKGPEGKPGKIGERGKPGEKGSKGHQGQLGEMGALGEQGDTGFIGPKGSRGTTGFMGAPGKMGQQGEPGLVGYEGHQGPQGSLGSPGPKGEKGEQGDDGKVEGPPGPSGDIGPVGNRGDRGEPGDPGYPGLEGVQGERGKEGAPGVPGNSGPRGFPGPKGSKGNKGPKGKNSPRGESGNRGSPGPVGVPGPRGVIGREGFEGEPGLDGAAGKDGAKGMPGDLGRDGDVGLPGKPGPQGNAGAPGLPGVQGSFGPKGERGITGHSGPPGKRGLNGGMGFPGKQGDQGFKGQPGDAGEQGFPGVLGIFGPQGPPGDFGPVGIQGPKGPQGLMGMQGAIGPVGIIGPSGNPGPQGDKGNKGEMGVQGPRGPPGPRGPPGPPGLPAVAFSHENEALGAALHVFDSRSALRSEMYQDTDLPLLDQGSEIFKTLHYLSILIHSIKNPLGTQENPARMCRDLLECEHRLNDGTYWIDPNLGCSSDNIEVTCSFTSGGQTCLKPVTASKLEIGVSLIQMNFIHLLSSEAVQIITVHCLNVSVWASEDSKTPSSSMVYFKAWDGQIIEAGGFIEPDLLKDECWITDGRWHQTQFIFRTQDPNLLPIVEIYNLPSTKPGSHYHLEVGPVCFL</sequence>
<accession>A0MSJ1</accession>